<gene>
    <name evidence="1" type="primary">rpsE</name>
    <name type="ordered locus">VV0392</name>
</gene>
<feature type="chain" id="PRO_0000131632" description="Small ribosomal subunit protein uS5">
    <location>
        <begin position="1"/>
        <end position="167"/>
    </location>
</feature>
<feature type="domain" description="S5 DRBM" evidence="1">
    <location>
        <begin position="12"/>
        <end position="75"/>
    </location>
</feature>
<proteinExistence type="inferred from homology"/>
<comment type="function">
    <text evidence="1">With S4 and S12 plays an important role in translational accuracy.</text>
</comment>
<comment type="function">
    <text evidence="1">Located at the back of the 30S subunit body where it stabilizes the conformation of the head with respect to the body.</text>
</comment>
<comment type="subunit">
    <text evidence="1">Part of the 30S ribosomal subunit. Contacts proteins S4 and S8.</text>
</comment>
<comment type="domain">
    <text>The N-terminal domain interacts with the head of the 30S subunit; the C-terminal domain interacts with the body and contacts protein S4. The interaction surface between S4 and S5 is involved in control of translational fidelity.</text>
</comment>
<comment type="similarity">
    <text evidence="1">Belongs to the universal ribosomal protein uS5 family.</text>
</comment>
<keyword id="KW-0687">Ribonucleoprotein</keyword>
<keyword id="KW-0689">Ribosomal protein</keyword>
<keyword id="KW-0694">RNA-binding</keyword>
<keyword id="KW-0699">rRNA-binding</keyword>
<protein>
    <recommendedName>
        <fullName evidence="1">Small ribosomal subunit protein uS5</fullName>
    </recommendedName>
    <alternativeName>
        <fullName evidence="2">30S ribosomal protein S5</fullName>
    </alternativeName>
</protein>
<sequence length="167" mass="17603">MAKEQQVQANDLQEKLIAVNRVSKTVKGGRIMSFTALTVVGDGNGRVGFGYGKAREVPAAIQKAMEKARRNMVTIALNEGTLHHPVKGRHSGSKVYMQPAAEGTGVIAGGAMRAVLEVAGVHNVLSKAYGSTNPINIVRATIDALVDVKSPEMVAAKRGLTVEAISE</sequence>
<name>RS5_VIBVY</name>
<organism>
    <name type="scientific">Vibrio vulnificus (strain YJ016)</name>
    <dbReference type="NCBI Taxonomy" id="196600"/>
    <lineage>
        <taxon>Bacteria</taxon>
        <taxon>Pseudomonadati</taxon>
        <taxon>Pseudomonadota</taxon>
        <taxon>Gammaproteobacteria</taxon>
        <taxon>Vibrionales</taxon>
        <taxon>Vibrionaceae</taxon>
        <taxon>Vibrio</taxon>
    </lineage>
</organism>
<accession>Q7MPH1</accession>
<evidence type="ECO:0000255" key="1">
    <source>
        <dbReference type="HAMAP-Rule" id="MF_01307"/>
    </source>
</evidence>
<evidence type="ECO:0000305" key="2"/>
<dbReference type="EMBL" id="BA000037">
    <property type="protein sequence ID" value="BAC93156.1"/>
    <property type="molecule type" value="Genomic_DNA"/>
</dbReference>
<dbReference type="RefSeq" id="WP_011078816.1">
    <property type="nucleotide sequence ID" value="NC_005139.1"/>
</dbReference>
<dbReference type="SMR" id="Q7MPH1"/>
<dbReference type="STRING" id="672.VV93_v1c03630"/>
<dbReference type="GeneID" id="95678964"/>
<dbReference type="KEGG" id="vvy:VV0392"/>
<dbReference type="eggNOG" id="COG0098">
    <property type="taxonomic scope" value="Bacteria"/>
</dbReference>
<dbReference type="HOGENOM" id="CLU_065898_2_2_6"/>
<dbReference type="Proteomes" id="UP000002675">
    <property type="component" value="Chromosome I"/>
</dbReference>
<dbReference type="GO" id="GO:0015935">
    <property type="term" value="C:small ribosomal subunit"/>
    <property type="evidence" value="ECO:0007669"/>
    <property type="project" value="InterPro"/>
</dbReference>
<dbReference type="GO" id="GO:0019843">
    <property type="term" value="F:rRNA binding"/>
    <property type="evidence" value="ECO:0007669"/>
    <property type="project" value="UniProtKB-UniRule"/>
</dbReference>
<dbReference type="GO" id="GO:0003735">
    <property type="term" value="F:structural constituent of ribosome"/>
    <property type="evidence" value="ECO:0007669"/>
    <property type="project" value="InterPro"/>
</dbReference>
<dbReference type="GO" id="GO:0006412">
    <property type="term" value="P:translation"/>
    <property type="evidence" value="ECO:0007669"/>
    <property type="project" value="UniProtKB-UniRule"/>
</dbReference>
<dbReference type="FunFam" id="3.30.160.20:FF:000001">
    <property type="entry name" value="30S ribosomal protein S5"/>
    <property type="match status" value="1"/>
</dbReference>
<dbReference type="FunFam" id="3.30.230.10:FF:000002">
    <property type="entry name" value="30S ribosomal protein S5"/>
    <property type="match status" value="1"/>
</dbReference>
<dbReference type="Gene3D" id="3.30.160.20">
    <property type="match status" value="1"/>
</dbReference>
<dbReference type="Gene3D" id="3.30.230.10">
    <property type="match status" value="1"/>
</dbReference>
<dbReference type="HAMAP" id="MF_01307_B">
    <property type="entry name" value="Ribosomal_uS5_B"/>
    <property type="match status" value="1"/>
</dbReference>
<dbReference type="InterPro" id="IPR020568">
    <property type="entry name" value="Ribosomal_Su5_D2-typ_SF"/>
</dbReference>
<dbReference type="InterPro" id="IPR000851">
    <property type="entry name" value="Ribosomal_uS5"/>
</dbReference>
<dbReference type="InterPro" id="IPR005712">
    <property type="entry name" value="Ribosomal_uS5_bac-type"/>
</dbReference>
<dbReference type="InterPro" id="IPR005324">
    <property type="entry name" value="Ribosomal_uS5_C"/>
</dbReference>
<dbReference type="InterPro" id="IPR013810">
    <property type="entry name" value="Ribosomal_uS5_N"/>
</dbReference>
<dbReference type="InterPro" id="IPR018192">
    <property type="entry name" value="Ribosomal_uS5_N_CS"/>
</dbReference>
<dbReference type="InterPro" id="IPR014721">
    <property type="entry name" value="Ribsml_uS5_D2-typ_fold_subgr"/>
</dbReference>
<dbReference type="NCBIfam" id="TIGR01021">
    <property type="entry name" value="rpsE_bact"/>
    <property type="match status" value="1"/>
</dbReference>
<dbReference type="PANTHER" id="PTHR48277">
    <property type="entry name" value="MITOCHONDRIAL RIBOSOMAL PROTEIN S5"/>
    <property type="match status" value="1"/>
</dbReference>
<dbReference type="PANTHER" id="PTHR48277:SF1">
    <property type="entry name" value="MITOCHONDRIAL RIBOSOMAL PROTEIN S5"/>
    <property type="match status" value="1"/>
</dbReference>
<dbReference type="Pfam" id="PF00333">
    <property type="entry name" value="Ribosomal_S5"/>
    <property type="match status" value="1"/>
</dbReference>
<dbReference type="Pfam" id="PF03719">
    <property type="entry name" value="Ribosomal_S5_C"/>
    <property type="match status" value="1"/>
</dbReference>
<dbReference type="SUPFAM" id="SSF54768">
    <property type="entry name" value="dsRNA-binding domain-like"/>
    <property type="match status" value="1"/>
</dbReference>
<dbReference type="SUPFAM" id="SSF54211">
    <property type="entry name" value="Ribosomal protein S5 domain 2-like"/>
    <property type="match status" value="1"/>
</dbReference>
<dbReference type="PROSITE" id="PS00585">
    <property type="entry name" value="RIBOSOMAL_S5"/>
    <property type="match status" value="1"/>
</dbReference>
<dbReference type="PROSITE" id="PS50881">
    <property type="entry name" value="S5_DSRBD"/>
    <property type="match status" value="1"/>
</dbReference>
<reference key="1">
    <citation type="journal article" date="2003" name="Genome Res.">
        <title>Comparative genome analysis of Vibrio vulnificus, a marine pathogen.</title>
        <authorList>
            <person name="Chen C.-Y."/>
            <person name="Wu K.-M."/>
            <person name="Chang Y.-C."/>
            <person name="Chang C.-H."/>
            <person name="Tsai H.-C."/>
            <person name="Liao T.-L."/>
            <person name="Liu Y.-M."/>
            <person name="Chen H.-J."/>
            <person name="Shen A.B.-T."/>
            <person name="Li J.-C."/>
            <person name="Su T.-L."/>
            <person name="Shao C.-P."/>
            <person name="Lee C.-T."/>
            <person name="Hor L.-I."/>
            <person name="Tsai S.-F."/>
        </authorList>
    </citation>
    <scope>NUCLEOTIDE SEQUENCE [LARGE SCALE GENOMIC DNA]</scope>
    <source>
        <strain>YJ016</strain>
    </source>
</reference>